<organism>
    <name type="scientific">Drosophila ananassae</name>
    <name type="common">Fruit fly</name>
    <dbReference type="NCBI Taxonomy" id="7217"/>
    <lineage>
        <taxon>Eukaryota</taxon>
        <taxon>Metazoa</taxon>
        <taxon>Ecdysozoa</taxon>
        <taxon>Arthropoda</taxon>
        <taxon>Hexapoda</taxon>
        <taxon>Insecta</taxon>
        <taxon>Pterygota</taxon>
        <taxon>Neoptera</taxon>
        <taxon>Endopterygota</taxon>
        <taxon>Diptera</taxon>
        <taxon>Brachycera</taxon>
        <taxon>Muscomorpha</taxon>
        <taxon>Ephydroidea</taxon>
        <taxon>Drosophilidae</taxon>
        <taxon>Drosophila</taxon>
        <taxon>Sophophora</taxon>
    </lineage>
</organism>
<evidence type="ECO:0000250" key="1">
    <source>
        <dbReference type="UniProtKB" id="P01112"/>
    </source>
</evidence>
<evidence type="ECO:0000250" key="2">
    <source>
        <dbReference type="UniProtKB" id="P08646"/>
    </source>
</evidence>
<evidence type="ECO:0000255" key="3"/>
<evidence type="ECO:0000312" key="4">
    <source>
        <dbReference type="EMBL" id="EDV44355.1"/>
    </source>
</evidence>
<gene>
    <name evidence="2" type="primary">Ras85D</name>
    <name type="ORF">GF16057</name>
</gene>
<comment type="function">
    <text evidence="1 2">Ras proteins bind GDP/GTP and possess intrinsic GTPase activity. Plays a role in eye development by regulating cell growth, survival of postmitotic ommatidial cells and differentiation of photoreceptor cells. During larval development, mediates Ptth/tor signaling leading to the production of ecdysone, a hormone required for the initiation of metamorphosis.</text>
</comment>
<comment type="catalytic activity">
    <reaction evidence="1">
        <text>GTP + H2O = GDP + phosphate + H(+)</text>
        <dbReference type="Rhea" id="RHEA:19669"/>
        <dbReference type="ChEBI" id="CHEBI:15377"/>
        <dbReference type="ChEBI" id="CHEBI:15378"/>
        <dbReference type="ChEBI" id="CHEBI:37565"/>
        <dbReference type="ChEBI" id="CHEBI:43474"/>
        <dbReference type="ChEBI" id="CHEBI:58189"/>
        <dbReference type="EC" id="3.6.5.2"/>
    </reaction>
</comment>
<comment type="activity regulation">
    <text>Alternates between an inactive form bound to GDP and an active form bound to GTP. Activated by a guanine nucleotide-exchange factor (GEF) and inactivated by a GTPase-activating protein (GAP).</text>
</comment>
<comment type="subcellular location">
    <subcellularLocation>
        <location evidence="2">Cell membrane</location>
        <topology evidence="2">Lipid-anchor</topology>
        <orientation evidence="2">Cytoplasmic side</orientation>
    </subcellularLocation>
</comment>
<comment type="similarity">
    <text evidence="3">Belongs to the small GTPase superfamily. Ras family.</text>
</comment>
<keyword id="KW-1003">Cell membrane</keyword>
<keyword id="KW-0342">GTP-binding</keyword>
<keyword id="KW-0378">Hydrolase</keyword>
<keyword id="KW-0449">Lipoprotein</keyword>
<keyword id="KW-0472">Membrane</keyword>
<keyword id="KW-0488">Methylation</keyword>
<keyword id="KW-0547">Nucleotide-binding</keyword>
<keyword id="KW-0636">Prenylation</keyword>
<keyword id="KW-1185">Reference proteome</keyword>
<dbReference type="EC" id="3.6.5.2" evidence="1"/>
<dbReference type="EMBL" id="CH902617">
    <property type="protein sequence ID" value="EDV44355.1"/>
    <property type="molecule type" value="Genomic_DNA"/>
</dbReference>
<dbReference type="SMR" id="B3M185"/>
<dbReference type="FunCoup" id="B3M185">
    <property type="interactions" value="1174"/>
</dbReference>
<dbReference type="STRING" id="7217.B3M185"/>
<dbReference type="EnsemblMetazoa" id="FBtr0120757">
    <property type="protein sequence ID" value="FBpp0119249"/>
    <property type="gene ID" value="FBgn0093079"/>
</dbReference>
<dbReference type="EnsemblMetazoa" id="XM_001955758.4">
    <property type="protein sequence ID" value="XP_001955794.1"/>
    <property type="gene ID" value="LOC6498854"/>
</dbReference>
<dbReference type="EnsemblMetazoa" id="XM_044714738.1">
    <property type="protein sequence ID" value="XP_044570673.1"/>
    <property type="gene ID" value="LOC6498854"/>
</dbReference>
<dbReference type="GeneID" id="6498854"/>
<dbReference type="KEGG" id="dan:6498854"/>
<dbReference type="CTD" id="41140"/>
<dbReference type="eggNOG" id="KOG0395">
    <property type="taxonomic scope" value="Eukaryota"/>
</dbReference>
<dbReference type="HOGENOM" id="CLU_041217_9_8_1"/>
<dbReference type="InParanoid" id="B3M185"/>
<dbReference type="OMA" id="CCGGCVI"/>
<dbReference type="OrthoDB" id="5976022at2759"/>
<dbReference type="PhylomeDB" id="B3M185"/>
<dbReference type="ChiTaRS" id="Ras85D">
    <property type="organism name" value="fly"/>
</dbReference>
<dbReference type="Proteomes" id="UP000007801">
    <property type="component" value="Unassembled WGS sequence"/>
</dbReference>
<dbReference type="GO" id="GO:0016020">
    <property type="term" value="C:membrane"/>
    <property type="evidence" value="ECO:0000250"/>
    <property type="project" value="UniProtKB"/>
</dbReference>
<dbReference type="GO" id="GO:0005886">
    <property type="term" value="C:plasma membrane"/>
    <property type="evidence" value="ECO:0007669"/>
    <property type="project" value="UniProtKB-SubCell"/>
</dbReference>
<dbReference type="GO" id="GO:0003925">
    <property type="term" value="F:G protein activity"/>
    <property type="evidence" value="ECO:0007669"/>
    <property type="project" value="UniProtKB-EC"/>
</dbReference>
<dbReference type="GO" id="GO:0005525">
    <property type="term" value="F:GTP binding"/>
    <property type="evidence" value="ECO:0007669"/>
    <property type="project" value="UniProtKB-KW"/>
</dbReference>
<dbReference type="GO" id="GO:0043539">
    <property type="term" value="F:protein serine/threonine kinase activator activity"/>
    <property type="evidence" value="ECO:0007669"/>
    <property type="project" value="EnsemblMetazoa"/>
</dbReference>
<dbReference type="GO" id="GO:0007298">
    <property type="term" value="P:border follicle cell migration"/>
    <property type="evidence" value="ECO:0007669"/>
    <property type="project" value="EnsemblMetazoa"/>
</dbReference>
<dbReference type="GO" id="GO:0009267">
    <property type="term" value="P:cellular response to starvation"/>
    <property type="evidence" value="ECO:0007669"/>
    <property type="project" value="EnsemblMetazoa"/>
</dbReference>
<dbReference type="GO" id="GO:0030381">
    <property type="term" value="P:chorion-containing eggshell pattern formation"/>
    <property type="evidence" value="ECO:0007669"/>
    <property type="project" value="EnsemblMetazoa"/>
</dbReference>
<dbReference type="GO" id="GO:0051607">
    <property type="term" value="P:defense response to virus"/>
    <property type="evidence" value="ECO:0007669"/>
    <property type="project" value="EnsemblMetazoa"/>
</dbReference>
<dbReference type="GO" id="GO:0008340">
    <property type="term" value="P:determination of adult lifespan"/>
    <property type="evidence" value="ECO:0007669"/>
    <property type="project" value="EnsemblMetazoa"/>
</dbReference>
<dbReference type="GO" id="GO:0007395">
    <property type="term" value="P:dorsal closure, spreading of leading edge cells"/>
    <property type="evidence" value="ECO:0007669"/>
    <property type="project" value="EnsemblMetazoa"/>
</dbReference>
<dbReference type="GO" id="GO:0007173">
    <property type="term" value="P:epidermal growth factor receptor signaling pathway"/>
    <property type="evidence" value="ECO:0007669"/>
    <property type="project" value="EnsemblMetazoa"/>
</dbReference>
<dbReference type="GO" id="GO:0007427">
    <property type="term" value="P:epithelial cell migration, open tracheal system"/>
    <property type="evidence" value="ECO:0007669"/>
    <property type="project" value="EnsemblMetazoa"/>
</dbReference>
<dbReference type="GO" id="GO:0035088">
    <property type="term" value="P:establishment or maintenance of apical/basal cell polarity"/>
    <property type="evidence" value="ECO:0007669"/>
    <property type="project" value="EnsemblMetazoa"/>
</dbReference>
<dbReference type="GO" id="GO:0007455">
    <property type="term" value="P:eye-antennal disc morphogenesis"/>
    <property type="evidence" value="ECO:0007669"/>
    <property type="project" value="EnsemblMetazoa"/>
</dbReference>
<dbReference type="GO" id="GO:0008543">
    <property type="term" value="P:fibroblast growth factor receptor signaling pathway"/>
    <property type="evidence" value="ECO:0007669"/>
    <property type="project" value="EnsemblMetazoa"/>
</dbReference>
<dbReference type="GO" id="GO:0035099">
    <property type="term" value="P:hemocyte migration"/>
    <property type="evidence" value="ECO:0007669"/>
    <property type="project" value="EnsemblMetazoa"/>
</dbReference>
<dbReference type="GO" id="GO:0008586">
    <property type="term" value="P:imaginal disc-derived wing vein morphogenesis"/>
    <property type="evidence" value="ECO:0007669"/>
    <property type="project" value="EnsemblMetazoa"/>
</dbReference>
<dbReference type="GO" id="GO:0007474">
    <property type="term" value="P:imaginal disc-derived wing vein specification"/>
    <property type="evidence" value="ECO:0007669"/>
    <property type="project" value="EnsemblMetazoa"/>
</dbReference>
<dbReference type="GO" id="GO:0002168">
    <property type="term" value="P:instar larval development"/>
    <property type="evidence" value="ECO:0007669"/>
    <property type="project" value="EnsemblMetazoa"/>
</dbReference>
<dbReference type="GO" id="GO:0036335">
    <property type="term" value="P:intestinal stem cell homeostasis"/>
    <property type="evidence" value="ECO:0007669"/>
    <property type="project" value="EnsemblMetazoa"/>
</dbReference>
<dbReference type="GO" id="GO:0007479">
    <property type="term" value="P:leg disc proximal/distal pattern formation"/>
    <property type="evidence" value="ECO:0007669"/>
    <property type="project" value="EnsemblMetazoa"/>
</dbReference>
<dbReference type="GO" id="GO:0035170">
    <property type="term" value="P:lymph gland crystal cell differentiation"/>
    <property type="evidence" value="ECO:0007669"/>
    <property type="project" value="EnsemblMetazoa"/>
</dbReference>
<dbReference type="GO" id="GO:0035169">
    <property type="term" value="P:lymph gland plasmatocyte differentiation"/>
    <property type="evidence" value="ECO:0007669"/>
    <property type="project" value="EnsemblMetazoa"/>
</dbReference>
<dbReference type="GO" id="GO:0072002">
    <property type="term" value="P:Malpighian tubule development"/>
    <property type="evidence" value="ECO:0007669"/>
    <property type="project" value="EnsemblMetazoa"/>
</dbReference>
<dbReference type="GO" id="GO:0000165">
    <property type="term" value="P:MAPK cascade"/>
    <property type="evidence" value="ECO:0007669"/>
    <property type="project" value="EnsemblMetazoa"/>
</dbReference>
<dbReference type="GO" id="GO:0001710">
    <property type="term" value="P:mesodermal cell fate commitment"/>
    <property type="evidence" value="ECO:0007669"/>
    <property type="project" value="EnsemblMetazoa"/>
</dbReference>
<dbReference type="GO" id="GO:0048626">
    <property type="term" value="P:myoblast fate specification"/>
    <property type="evidence" value="ECO:0007669"/>
    <property type="project" value="EnsemblMetazoa"/>
</dbReference>
<dbReference type="GO" id="GO:2001234">
    <property type="term" value="P:negative regulation of apoptotic signaling pathway"/>
    <property type="evidence" value="ECO:0007669"/>
    <property type="project" value="EnsemblMetazoa"/>
</dbReference>
<dbReference type="GO" id="GO:0046673">
    <property type="term" value="P:negative regulation of compound eye retinal cell programmed cell death"/>
    <property type="evidence" value="ECO:0007669"/>
    <property type="project" value="EnsemblMetazoa"/>
</dbReference>
<dbReference type="GO" id="GO:0010629">
    <property type="term" value="P:negative regulation of gene expression"/>
    <property type="evidence" value="ECO:0007669"/>
    <property type="project" value="EnsemblMetazoa"/>
</dbReference>
<dbReference type="GO" id="GO:0016242">
    <property type="term" value="P:negative regulation of macroautophagy"/>
    <property type="evidence" value="ECO:0007669"/>
    <property type="project" value="EnsemblMetazoa"/>
</dbReference>
<dbReference type="GO" id="GO:0016318">
    <property type="term" value="P:ommatidial rotation"/>
    <property type="evidence" value="ECO:0007669"/>
    <property type="project" value="EnsemblMetazoa"/>
</dbReference>
<dbReference type="GO" id="GO:0007309">
    <property type="term" value="P:oocyte axis specification"/>
    <property type="evidence" value="ECO:0007669"/>
    <property type="project" value="EnsemblMetazoa"/>
</dbReference>
<dbReference type="GO" id="GO:0007422">
    <property type="term" value="P:peripheral nervous system development"/>
    <property type="evidence" value="ECO:0007669"/>
    <property type="project" value="EnsemblMetazoa"/>
</dbReference>
<dbReference type="GO" id="GO:0043703">
    <property type="term" value="P:photoreceptor cell fate determination"/>
    <property type="evidence" value="ECO:0007669"/>
    <property type="project" value="EnsemblMetazoa"/>
</dbReference>
<dbReference type="GO" id="GO:0008594">
    <property type="term" value="P:photoreceptor cell morphogenesis"/>
    <property type="evidence" value="ECO:0007669"/>
    <property type="project" value="EnsemblMetazoa"/>
</dbReference>
<dbReference type="GO" id="GO:0045793">
    <property type="term" value="P:positive regulation of cell size"/>
    <property type="evidence" value="ECO:0007669"/>
    <property type="project" value="EnsemblMetazoa"/>
</dbReference>
<dbReference type="GO" id="GO:0070374">
    <property type="term" value="P:positive regulation of ERK1 and ERK2 cascade"/>
    <property type="evidence" value="ECO:0007669"/>
    <property type="project" value="EnsemblMetazoa"/>
</dbReference>
<dbReference type="GO" id="GO:0035208">
    <property type="term" value="P:positive regulation of hemocyte proliferation"/>
    <property type="evidence" value="ECO:0007669"/>
    <property type="project" value="EnsemblMetazoa"/>
</dbReference>
<dbReference type="GO" id="GO:0046534">
    <property type="term" value="P:positive regulation of photoreceptor cell differentiation"/>
    <property type="evidence" value="ECO:0007669"/>
    <property type="project" value="EnsemblMetazoa"/>
</dbReference>
<dbReference type="GO" id="GO:1904263">
    <property type="term" value="P:positive regulation of TORC1 signaling"/>
    <property type="evidence" value="ECO:0007669"/>
    <property type="project" value="EnsemblMetazoa"/>
</dbReference>
<dbReference type="GO" id="GO:0045465">
    <property type="term" value="P:R8 cell differentiation"/>
    <property type="evidence" value="ECO:0007669"/>
    <property type="project" value="EnsemblMetazoa"/>
</dbReference>
<dbReference type="GO" id="GO:0007265">
    <property type="term" value="P:Ras protein signal transduction"/>
    <property type="evidence" value="ECO:0007669"/>
    <property type="project" value="EnsemblMetazoa"/>
</dbReference>
<dbReference type="GO" id="GO:0040014">
    <property type="term" value="P:regulation of multicellular organism growth"/>
    <property type="evidence" value="ECO:0007669"/>
    <property type="project" value="EnsemblMetazoa"/>
</dbReference>
<dbReference type="GO" id="GO:0045500">
    <property type="term" value="P:sevenless signaling pathway"/>
    <property type="evidence" value="ECO:0007669"/>
    <property type="project" value="EnsemblMetazoa"/>
</dbReference>
<dbReference type="GO" id="GO:0048865">
    <property type="term" value="P:stem cell fate commitment"/>
    <property type="evidence" value="ECO:0007669"/>
    <property type="project" value="EnsemblMetazoa"/>
</dbReference>
<dbReference type="GO" id="GO:0072089">
    <property type="term" value="P:stem cell proliferation"/>
    <property type="evidence" value="ECO:0007669"/>
    <property type="project" value="EnsemblMetazoa"/>
</dbReference>
<dbReference type="GO" id="GO:0007430">
    <property type="term" value="P:terminal branching, open tracheal system"/>
    <property type="evidence" value="ECO:0007669"/>
    <property type="project" value="EnsemblMetazoa"/>
</dbReference>
<dbReference type="GO" id="GO:0007362">
    <property type="term" value="P:terminal region determination"/>
    <property type="evidence" value="ECO:0007669"/>
    <property type="project" value="EnsemblMetazoa"/>
</dbReference>
<dbReference type="GO" id="GO:0008293">
    <property type="term" value="P:torso signaling pathway"/>
    <property type="evidence" value="ECO:0007669"/>
    <property type="project" value="EnsemblMetazoa"/>
</dbReference>
<dbReference type="GO" id="GO:0060438">
    <property type="term" value="P:trachea development"/>
    <property type="evidence" value="ECO:0007669"/>
    <property type="project" value="EnsemblMetazoa"/>
</dbReference>
<dbReference type="GO" id="GO:0007426">
    <property type="term" value="P:tracheal outgrowth, open tracheal system"/>
    <property type="evidence" value="ECO:0007669"/>
    <property type="project" value="EnsemblMetazoa"/>
</dbReference>
<dbReference type="GO" id="GO:0048010">
    <property type="term" value="P:vascular endothelial growth factor receptor signaling pathway"/>
    <property type="evidence" value="ECO:0007669"/>
    <property type="project" value="EnsemblMetazoa"/>
</dbReference>
<dbReference type="GO" id="GO:0035313">
    <property type="term" value="P:wound healing, spreading of epidermal cells"/>
    <property type="evidence" value="ECO:0007669"/>
    <property type="project" value="EnsemblMetazoa"/>
</dbReference>
<dbReference type="CDD" id="cd04138">
    <property type="entry name" value="H_N_K_Ras_like"/>
    <property type="match status" value="1"/>
</dbReference>
<dbReference type="FunFam" id="3.40.50.300:FF:000096">
    <property type="entry name" value="KRAS proto-oncogene, GTPase"/>
    <property type="match status" value="1"/>
</dbReference>
<dbReference type="Gene3D" id="3.40.50.300">
    <property type="entry name" value="P-loop containing nucleotide triphosphate hydrolases"/>
    <property type="match status" value="1"/>
</dbReference>
<dbReference type="InterPro" id="IPR027417">
    <property type="entry name" value="P-loop_NTPase"/>
</dbReference>
<dbReference type="InterPro" id="IPR005225">
    <property type="entry name" value="Small_GTP-bd"/>
</dbReference>
<dbReference type="InterPro" id="IPR001806">
    <property type="entry name" value="Small_GTPase"/>
</dbReference>
<dbReference type="InterPro" id="IPR020849">
    <property type="entry name" value="Small_GTPase_Ras-type"/>
</dbReference>
<dbReference type="NCBIfam" id="TIGR00231">
    <property type="entry name" value="small_GTP"/>
    <property type="match status" value="1"/>
</dbReference>
<dbReference type="PANTHER" id="PTHR24070">
    <property type="entry name" value="RAS, DI-RAS, AND RHEB FAMILY MEMBERS OF SMALL GTPASE SUPERFAMILY"/>
    <property type="match status" value="1"/>
</dbReference>
<dbReference type="Pfam" id="PF00071">
    <property type="entry name" value="Ras"/>
    <property type="match status" value="1"/>
</dbReference>
<dbReference type="PRINTS" id="PR00449">
    <property type="entry name" value="RASTRNSFRMNG"/>
</dbReference>
<dbReference type="SMART" id="SM00175">
    <property type="entry name" value="RAB"/>
    <property type="match status" value="1"/>
</dbReference>
<dbReference type="SMART" id="SM00176">
    <property type="entry name" value="RAN"/>
    <property type="match status" value="1"/>
</dbReference>
<dbReference type="SMART" id="SM00173">
    <property type="entry name" value="RAS"/>
    <property type="match status" value="1"/>
</dbReference>
<dbReference type="SMART" id="SM00174">
    <property type="entry name" value="RHO"/>
    <property type="match status" value="1"/>
</dbReference>
<dbReference type="SUPFAM" id="SSF52540">
    <property type="entry name" value="P-loop containing nucleoside triphosphate hydrolases"/>
    <property type="match status" value="1"/>
</dbReference>
<dbReference type="PROSITE" id="PS51421">
    <property type="entry name" value="RAS"/>
    <property type="match status" value="1"/>
</dbReference>
<name>RAS1_DROAN</name>
<feature type="chain" id="PRO_0000363706" description="Ras-like protein 1" evidence="2">
    <location>
        <begin position="1"/>
        <end position="186"/>
    </location>
</feature>
<feature type="propeptide" id="PRO_0000363707" description="Removed in mature form" evidence="2">
    <location>
        <begin position="187"/>
        <end position="189"/>
    </location>
</feature>
<feature type="short sequence motif" description="Effector region">
    <location>
        <begin position="32"/>
        <end position="40"/>
    </location>
</feature>
<feature type="binding site" evidence="1">
    <location>
        <begin position="10"/>
        <end position="17"/>
    </location>
    <ligand>
        <name>GTP</name>
        <dbReference type="ChEBI" id="CHEBI:37565"/>
    </ligand>
</feature>
<feature type="binding site" evidence="1">
    <location>
        <begin position="57"/>
        <end position="61"/>
    </location>
    <ligand>
        <name>GTP</name>
        <dbReference type="ChEBI" id="CHEBI:37565"/>
    </ligand>
</feature>
<feature type="binding site" evidence="1">
    <location>
        <begin position="116"/>
        <end position="119"/>
    </location>
    <ligand>
        <name>GTP</name>
        <dbReference type="ChEBI" id="CHEBI:37565"/>
    </ligand>
</feature>
<feature type="modified residue" description="Cysteine methyl ester" evidence="2">
    <location>
        <position position="186"/>
    </location>
</feature>
<feature type="lipid moiety-binding region" description="S-geranylgeranyl cysteine" evidence="2">
    <location>
        <position position="186"/>
    </location>
</feature>
<sequence>MTEYKLVVVGAGGVGKSALTIQLIQNHFVDEYDPTIEDSYRKQVVIDGETCLLDILDTAGQEEYSAMRDQYMRTGEGFLLVFAVNSAKSFEDIGTYREQIKRVKDAEEVPMVLVGNKCDLASWNVNNEQAREVAKQYGIPYIETSAKTRMGVDDAFYTLVREIRKDKDNKGRRGRKMNKPNRRFKCKML</sequence>
<proteinExistence type="inferred from homology"/>
<accession>B3M185</accession>
<protein>
    <recommendedName>
        <fullName evidence="2">Ras-like protein 1</fullName>
        <ecNumber evidence="1">3.6.5.2</ecNumber>
    </recommendedName>
</protein>
<reference evidence="4" key="1">
    <citation type="journal article" date="2007" name="Nature">
        <title>Evolution of genes and genomes on the Drosophila phylogeny.</title>
        <authorList>
            <consortium name="Drosophila 12 genomes consortium"/>
        </authorList>
    </citation>
    <scope>NUCLEOTIDE SEQUENCE [LARGE SCALE GENOMIC DNA]</scope>
    <source>
        <strain evidence="4">Tucson 14024-0371.13</strain>
    </source>
</reference>